<gene>
    <name evidence="1" type="primary">argG</name>
    <name type="ordered locus">Ent638_3608</name>
</gene>
<name>ASSY_ENT38</name>
<keyword id="KW-0028">Amino-acid biosynthesis</keyword>
<keyword id="KW-0055">Arginine biosynthesis</keyword>
<keyword id="KW-0067">ATP-binding</keyword>
<keyword id="KW-0963">Cytoplasm</keyword>
<keyword id="KW-0436">Ligase</keyword>
<keyword id="KW-0547">Nucleotide-binding</keyword>
<feature type="chain" id="PRO_1000061197" description="Argininosuccinate synthase">
    <location>
        <begin position="1"/>
        <end position="448"/>
    </location>
</feature>
<feature type="binding site" evidence="1">
    <location>
        <begin position="17"/>
        <end position="25"/>
    </location>
    <ligand>
        <name>ATP</name>
        <dbReference type="ChEBI" id="CHEBI:30616"/>
    </ligand>
</feature>
<feature type="binding site" evidence="1">
    <location>
        <position position="43"/>
    </location>
    <ligand>
        <name>ATP</name>
        <dbReference type="ChEBI" id="CHEBI:30616"/>
    </ligand>
</feature>
<feature type="binding site" evidence="1">
    <location>
        <position position="99"/>
    </location>
    <ligand>
        <name>L-citrulline</name>
        <dbReference type="ChEBI" id="CHEBI:57743"/>
    </ligand>
</feature>
<feature type="binding site" evidence="1">
    <location>
        <position position="129"/>
    </location>
    <ligand>
        <name>ATP</name>
        <dbReference type="ChEBI" id="CHEBI:30616"/>
    </ligand>
</feature>
<feature type="binding site" evidence="1">
    <location>
        <position position="131"/>
    </location>
    <ligand>
        <name>ATP</name>
        <dbReference type="ChEBI" id="CHEBI:30616"/>
    </ligand>
</feature>
<feature type="binding site" evidence="1">
    <location>
        <position position="131"/>
    </location>
    <ligand>
        <name>L-aspartate</name>
        <dbReference type="ChEBI" id="CHEBI:29991"/>
    </ligand>
</feature>
<feature type="binding site" evidence="1">
    <location>
        <position position="135"/>
    </location>
    <ligand>
        <name>L-aspartate</name>
        <dbReference type="ChEBI" id="CHEBI:29991"/>
    </ligand>
</feature>
<feature type="binding site" evidence="1">
    <location>
        <position position="135"/>
    </location>
    <ligand>
        <name>L-citrulline</name>
        <dbReference type="ChEBI" id="CHEBI:57743"/>
    </ligand>
</feature>
<feature type="binding site" evidence="1">
    <location>
        <position position="136"/>
    </location>
    <ligand>
        <name>ATP</name>
        <dbReference type="ChEBI" id="CHEBI:30616"/>
    </ligand>
</feature>
<feature type="binding site" evidence="1">
    <location>
        <position position="136"/>
    </location>
    <ligand>
        <name>L-aspartate</name>
        <dbReference type="ChEBI" id="CHEBI:29991"/>
    </ligand>
</feature>
<feature type="binding site" evidence="1">
    <location>
        <position position="139"/>
    </location>
    <ligand>
        <name>L-citrulline</name>
        <dbReference type="ChEBI" id="CHEBI:57743"/>
    </ligand>
</feature>
<feature type="binding site" evidence="1">
    <location>
        <position position="192"/>
    </location>
    <ligand>
        <name>L-citrulline</name>
        <dbReference type="ChEBI" id="CHEBI:57743"/>
    </ligand>
</feature>
<feature type="binding site" evidence="1">
    <location>
        <position position="194"/>
    </location>
    <ligand>
        <name>ATP</name>
        <dbReference type="ChEBI" id="CHEBI:30616"/>
    </ligand>
</feature>
<feature type="binding site" evidence="1">
    <location>
        <position position="201"/>
    </location>
    <ligand>
        <name>L-citrulline</name>
        <dbReference type="ChEBI" id="CHEBI:57743"/>
    </ligand>
</feature>
<feature type="binding site" evidence="1">
    <location>
        <position position="203"/>
    </location>
    <ligand>
        <name>L-citrulline</name>
        <dbReference type="ChEBI" id="CHEBI:57743"/>
    </ligand>
</feature>
<feature type="binding site" evidence="1">
    <location>
        <position position="280"/>
    </location>
    <ligand>
        <name>L-citrulline</name>
        <dbReference type="ChEBI" id="CHEBI:57743"/>
    </ligand>
</feature>
<organism>
    <name type="scientific">Enterobacter sp. (strain 638)</name>
    <dbReference type="NCBI Taxonomy" id="399742"/>
    <lineage>
        <taxon>Bacteria</taxon>
        <taxon>Pseudomonadati</taxon>
        <taxon>Pseudomonadota</taxon>
        <taxon>Gammaproteobacteria</taxon>
        <taxon>Enterobacterales</taxon>
        <taxon>Enterobacteriaceae</taxon>
        <taxon>Enterobacter</taxon>
    </lineage>
</organism>
<evidence type="ECO:0000255" key="1">
    <source>
        <dbReference type="HAMAP-Rule" id="MF_00581"/>
    </source>
</evidence>
<proteinExistence type="inferred from homology"/>
<reference key="1">
    <citation type="journal article" date="2010" name="PLoS Genet.">
        <title>Genome sequence of the plant growth promoting endophytic bacterium Enterobacter sp. 638.</title>
        <authorList>
            <person name="Taghavi S."/>
            <person name="van der Lelie D."/>
            <person name="Hoffman A."/>
            <person name="Zhang Y.B."/>
            <person name="Walla M.D."/>
            <person name="Vangronsveld J."/>
            <person name="Newman L."/>
            <person name="Monchy S."/>
        </authorList>
    </citation>
    <scope>NUCLEOTIDE SEQUENCE [LARGE SCALE GENOMIC DNA]</scope>
    <source>
        <strain>638</strain>
    </source>
</reference>
<comment type="catalytic activity">
    <reaction evidence="1">
        <text>L-citrulline + L-aspartate + ATP = 2-(N(omega)-L-arginino)succinate + AMP + diphosphate + H(+)</text>
        <dbReference type="Rhea" id="RHEA:10932"/>
        <dbReference type="ChEBI" id="CHEBI:15378"/>
        <dbReference type="ChEBI" id="CHEBI:29991"/>
        <dbReference type="ChEBI" id="CHEBI:30616"/>
        <dbReference type="ChEBI" id="CHEBI:33019"/>
        <dbReference type="ChEBI" id="CHEBI:57472"/>
        <dbReference type="ChEBI" id="CHEBI:57743"/>
        <dbReference type="ChEBI" id="CHEBI:456215"/>
        <dbReference type="EC" id="6.3.4.5"/>
    </reaction>
</comment>
<comment type="pathway">
    <text evidence="1">Amino-acid biosynthesis; L-arginine biosynthesis; L-arginine from L-ornithine and carbamoyl phosphate: step 2/3.</text>
</comment>
<comment type="subunit">
    <text evidence="1">Homotetramer.</text>
</comment>
<comment type="subcellular location">
    <subcellularLocation>
        <location evidence="1">Cytoplasm</location>
    </subcellularLocation>
</comment>
<comment type="similarity">
    <text evidence="1">Belongs to the argininosuccinate synthase family. Type 2 subfamily.</text>
</comment>
<dbReference type="EC" id="6.3.4.5" evidence="1"/>
<dbReference type="EMBL" id="CP000653">
    <property type="protein sequence ID" value="ABP62266.1"/>
    <property type="molecule type" value="Genomic_DNA"/>
</dbReference>
<dbReference type="RefSeq" id="WP_015960591.1">
    <property type="nucleotide sequence ID" value="NC_009436.1"/>
</dbReference>
<dbReference type="SMR" id="A4WEY6"/>
<dbReference type="STRING" id="399742.Ent638_3608"/>
<dbReference type="KEGG" id="ent:Ent638_3608"/>
<dbReference type="eggNOG" id="COG0137">
    <property type="taxonomic scope" value="Bacteria"/>
</dbReference>
<dbReference type="HOGENOM" id="CLU_032784_4_1_6"/>
<dbReference type="UniPathway" id="UPA00068">
    <property type="reaction ID" value="UER00113"/>
</dbReference>
<dbReference type="Proteomes" id="UP000000230">
    <property type="component" value="Chromosome"/>
</dbReference>
<dbReference type="GO" id="GO:0005737">
    <property type="term" value="C:cytoplasm"/>
    <property type="evidence" value="ECO:0007669"/>
    <property type="project" value="UniProtKB-SubCell"/>
</dbReference>
<dbReference type="GO" id="GO:0004055">
    <property type="term" value="F:argininosuccinate synthase activity"/>
    <property type="evidence" value="ECO:0007669"/>
    <property type="project" value="UniProtKB-UniRule"/>
</dbReference>
<dbReference type="GO" id="GO:0005524">
    <property type="term" value="F:ATP binding"/>
    <property type="evidence" value="ECO:0007669"/>
    <property type="project" value="UniProtKB-UniRule"/>
</dbReference>
<dbReference type="GO" id="GO:0042803">
    <property type="term" value="F:protein homodimerization activity"/>
    <property type="evidence" value="ECO:0007669"/>
    <property type="project" value="InterPro"/>
</dbReference>
<dbReference type="GO" id="GO:0000053">
    <property type="term" value="P:argininosuccinate metabolic process"/>
    <property type="evidence" value="ECO:0007669"/>
    <property type="project" value="TreeGrafter"/>
</dbReference>
<dbReference type="GO" id="GO:0006526">
    <property type="term" value="P:L-arginine biosynthetic process"/>
    <property type="evidence" value="ECO:0007669"/>
    <property type="project" value="UniProtKB-UniRule"/>
</dbReference>
<dbReference type="GO" id="GO:0000050">
    <property type="term" value="P:urea cycle"/>
    <property type="evidence" value="ECO:0007669"/>
    <property type="project" value="TreeGrafter"/>
</dbReference>
<dbReference type="CDD" id="cd01999">
    <property type="entry name" value="ASS"/>
    <property type="match status" value="1"/>
</dbReference>
<dbReference type="FunFam" id="1.10.287.400:FF:000001">
    <property type="entry name" value="Argininosuccinate synthase"/>
    <property type="match status" value="1"/>
</dbReference>
<dbReference type="Gene3D" id="1.10.287.400">
    <property type="match status" value="1"/>
</dbReference>
<dbReference type="Gene3D" id="3.90.1260.10">
    <property type="entry name" value="Argininosuccinate synthetase, chain A, domain 2"/>
    <property type="match status" value="1"/>
</dbReference>
<dbReference type="Gene3D" id="3.40.50.620">
    <property type="entry name" value="HUPs"/>
    <property type="match status" value="1"/>
</dbReference>
<dbReference type="HAMAP" id="MF_00581">
    <property type="entry name" value="Arg_succ_synth_type2"/>
    <property type="match status" value="1"/>
</dbReference>
<dbReference type="InterPro" id="IPR023437">
    <property type="entry name" value="Arg_succ_synth_type2_subfam"/>
</dbReference>
<dbReference type="InterPro" id="IPR048268">
    <property type="entry name" value="Arginosuc_syn_C"/>
</dbReference>
<dbReference type="InterPro" id="IPR048267">
    <property type="entry name" value="Arginosuc_syn_N"/>
</dbReference>
<dbReference type="InterPro" id="IPR001518">
    <property type="entry name" value="Arginosuc_synth"/>
</dbReference>
<dbReference type="InterPro" id="IPR018223">
    <property type="entry name" value="Arginosuc_synth_CS"/>
</dbReference>
<dbReference type="InterPro" id="IPR023434">
    <property type="entry name" value="Arginosuc_synth_type_1_subfam"/>
</dbReference>
<dbReference type="InterPro" id="IPR024074">
    <property type="entry name" value="AS_cat/multimer_dom_body"/>
</dbReference>
<dbReference type="InterPro" id="IPR024073">
    <property type="entry name" value="AS_multimer_C_tail"/>
</dbReference>
<dbReference type="InterPro" id="IPR014729">
    <property type="entry name" value="Rossmann-like_a/b/a_fold"/>
</dbReference>
<dbReference type="NCBIfam" id="TIGR00032">
    <property type="entry name" value="argG"/>
    <property type="match status" value="1"/>
</dbReference>
<dbReference type="NCBIfam" id="NF003779">
    <property type="entry name" value="PRK05370.1"/>
    <property type="match status" value="1"/>
</dbReference>
<dbReference type="PANTHER" id="PTHR11587">
    <property type="entry name" value="ARGININOSUCCINATE SYNTHASE"/>
    <property type="match status" value="1"/>
</dbReference>
<dbReference type="PANTHER" id="PTHR11587:SF2">
    <property type="entry name" value="ARGININOSUCCINATE SYNTHASE"/>
    <property type="match status" value="1"/>
</dbReference>
<dbReference type="Pfam" id="PF20979">
    <property type="entry name" value="Arginosuc_syn_C"/>
    <property type="match status" value="1"/>
</dbReference>
<dbReference type="Pfam" id="PF00764">
    <property type="entry name" value="Arginosuc_synth"/>
    <property type="match status" value="1"/>
</dbReference>
<dbReference type="SUPFAM" id="SSF52402">
    <property type="entry name" value="Adenine nucleotide alpha hydrolases-like"/>
    <property type="match status" value="1"/>
</dbReference>
<dbReference type="SUPFAM" id="SSF69864">
    <property type="entry name" value="Argininosuccinate synthetase, C-terminal domain"/>
    <property type="match status" value="1"/>
</dbReference>
<dbReference type="PROSITE" id="PS00564">
    <property type="entry name" value="ARGININOSUCCIN_SYN_1"/>
    <property type="match status" value="1"/>
</dbReference>
<dbReference type="PROSITE" id="PS00565">
    <property type="entry name" value="ARGININOSUCCIN_SYN_2"/>
    <property type="match status" value="1"/>
</dbReference>
<sequence length="448" mass="50063">MTTILKHLPVGQRIGIAFSGGLDTSAALLWMRQKGAVPYAYTANLGQPDEEDYDAIPRRAMEYGAENARLIDCRKQLVAEGIAAIQCGAFHNTTGGLTYFNTTPLGRAVTGTMLVAAMKDDGVNIWGDGSTYKGNDIERFYRYGLLTNAELQIYKPWLDTDFIDELGGRQEMSEFMVASGFDYKMSAEKAYSTDSNMLGATHEAKDLEFLNSSVKIVNPIMGVKFWDENVKVQVEEVTVRFERGHPVALNGQTFSDDVELMLEANRIGGRHGLGMSDQIENRIIEAKSRGIYEAPGMALLHIAYERLLTGIHNEDTIEQYHSHGRQLGKLLYQGRWFDPQALMLRDALQRWVASAITGEVTLELRRGNDYSILNTVSDNLTYKAERLTMEKGDSVFSPDDRIGQLTMRNLDITDTREKLFNYIETGLLSASSGNGLPQVENLEHSDKK</sequence>
<protein>
    <recommendedName>
        <fullName evidence="1">Argininosuccinate synthase</fullName>
        <ecNumber evidence="1">6.3.4.5</ecNumber>
    </recommendedName>
    <alternativeName>
        <fullName evidence="1">Citrulline--aspartate ligase</fullName>
    </alternativeName>
</protein>
<accession>A4WEY6</accession>